<protein>
    <recommendedName>
        <fullName evidence="1">Hydroxyethylthiazole kinase</fullName>
        <ecNumber evidence="1">2.7.1.50</ecNumber>
    </recommendedName>
    <alternativeName>
        <fullName evidence="1">4-methyl-5-beta-hydroxyethylthiazole kinase</fullName>
        <shortName evidence="1">TH kinase</shortName>
        <shortName evidence="1">Thz kinase</shortName>
    </alternativeName>
</protein>
<sequence>MNYLNKIRIENPLTICYTNDVVKNFTANGLLSIGASPAMSEAPEEAEEFYKVAQALLINIGTLTAENEQDIIAIAQTANEAGLPIVFDPVAVGASTYRKQFCKLLLKSAKVSVIKGNASEILALIDDTATMKGTDSDANLDAVAIAKKAYATYKTAIVITGKEDVIVQDNKAFVLANGSPLLARVTGAGCLLGGVIAGFLFRETEPDIEALIEAVSVFNIAAEVAAENENCGGPGTFSPLLLDTLYHLNETTYQQRIRIQEVE</sequence>
<comment type="function">
    <text evidence="1">Catalyzes the phosphorylation of the hydroxyl group of 4-methyl-5-beta-hydroxyethylthiazole (THZ).</text>
</comment>
<comment type="catalytic activity">
    <reaction evidence="1">
        <text>5-(2-hydroxyethyl)-4-methylthiazole + ATP = 4-methyl-5-(2-phosphooxyethyl)-thiazole + ADP + H(+)</text>
        <dbReference type="Rhea" id="RHEA:24212"/>
        <dbReference type="ChEBI" id="CHEBI:15378"/>
        <dbReference type="ChEBI" id="CHEBI:17957"/>
        <dbReference type="ChEBI" id="CHEBI:30616"/>
        <dbReference type="ChEBI" id="CHEBI:58296"/>
        <dbReference type="ChEBI" id="CHEBI:456216"/>
        <dbReference type="EC" id="2.7.1.50"/>
    </reaction>
</comment>
<comment type="cofactor">
    <cofactor evidence="1">
        <name>Mg(2+)</name>
        <dbReference type="ChEBI" id="CHEBI:18420"/>
    </cofactor>
</comment>
<comment type="pathway">
    <text evidence="1">Cofactor biosynthesis; thiamine diphosphate biosynthesis; 4-methyl-5-(2-phosphoethyl)-thiazole from 5-(2-hydroxyethyl)-4-methylthiazole: step 1/1.</text>
</comment>
<comment type="similarity">
    <text evidence="1">Belongs to the Thz kinase family.</text>
</comment>
<feature type="chain" id="PRO_1000021533" description="Hydroxyethylthiazole kinase">
    <location>
        <begin position="1"/>
        <end position="263"/>
    </location>
</feature>
<feature type="binding site" evidence="1">
    <location>
        <position position="39"/>
    </location>
    <ligand>
        <name>substrate</name>
    </ligand>
</feature>
<feature type="binding site" evidence="1">
    <location>
        <position position="115"/>
    </location>
    <ligand>
        <name>ATP</name>
        <dbReference type="ChEBI" id="CHEBI:30616"/>
    </ligand>
</feature>
<feature type="binding site" evidence="1">
    <location>
        <position position="160"/>
    </location>
    <ligand>
        <name>ATP</name>
        <dbReference type="ChEBI" id="CHEBI:30616"/>
    </ligand>
</feature>
<feature type="binding site" evidence="1">
    <location>
        <position position="187"/>
    </location>
    <ligand>
        <name>substrate</name>
    </ligand>
</feature>
<organism>
    <name type="scientific">Staphylococcus aureus (strain NCTC 8325 / PS 47)</name>
    <dbReference type="NCBI Taxonomy" id="93061"/>
    <lineage>
        <taxon>Bacteria</taxon>
        <taxon>Bacillati</taxon>
        <taxon>Bacillota</taxon>
        <taxon>Bacilli</taxon>
        <taxon>Bacillales</taxon>
        <taxon>Staphylococcaceae</taxon>
        <taxon>Staphylococcus</taxon>
    </lineage>
</organism>
<accession>Q2FWG2</accession>
<proteinExistence type="inferred from homology"/>
<dbReference type="EC" id="2.7.1.50" evidence="1"/>
<dbReference type="EMBL" id="CP000253">
    <property type="protein sequence ID" value="ABD31363.1"/>
    <property type="molecule type" value="Genomic_DNA"/>
</dbReference>
<dbReference type="RefSeq" id="WP_001108479.1">
    <property type="nucleotide sequence ID" value="NZ_LS483365.1"/>
</dbReference>
<dbReference type="RefSeq" id="YP_500808.1">
    <property type="nucleotide sequence ID" value="NC_007795.1"/>
</dbReference>
<dbReference type="SMR" id="Q2FWG2"/>
<dbReference type="STRING" id="93061.SAOUHSC_02329"/>
<dbReference type="PaxDb" id="1280-SAXN108_2337"/>
<dbReference type="GeneID" id="3920954"/>
<dbReference type="KEGG" id="sao:SAOUHSC_02329"/>
<dbReference type="PATRIC" id="fig|93061.5.peg.2110"/>
<dbReference type="eggNOG" id="COG2145">
    <property type="taxonomic scope" value="Bacteria"/>
</dbReference>
<dbReference type="HOGENOM" id="CLU_019943_0_2_9"/>
<dbReference type="OrthoDB" id="9778146at2"/>
<dbReference type="UniPathway" id="UPA00060">
    <property type="reaction ID" value="UER00139"/>
</dbReference>
<dbReference type="PRO" id="PR:Q2FWG2"/>
<dbReference type="Proteomes" id="UP000008816">
    <property type="component" value="Chromosome"/>
</dbReference>
<dbReference type="GO" id="GO:0005524">
    <property type="term" value="F:ATP binding"/>
    <property type="evidence" value="ECO:0007669"/>
    <property type="project" value="UniProtKB-UniRule"/>
</dbReference>
<dbReference type="GO" id="GO:0004417">
    <property type="term" value="F:hydroxyethylthiazole kinase activity"/>
    <property type="evidence" value="ECO:0007669"/>
    <property type="project" value="UniProtKB-UniRule"/>
</dbReference>
<dbReference type="GO" id="GO:0000287">
    <property type="term" value="F:magnesium ion binding"/>
    <property type="evidence" value="ECO:0007669"/>
    <property type="project" value="UniProtKB-UniRule"/>
</dbReference>
<dbReference type="GO" id="GO:0009228">
    <property type="term" value="P:thiamine biosynthetic process"/>
    <property type="evidence" value="ECO:0007669"/>
    <property type="project" value="UniProtKB-KW"/>
</dbReference>
<dbReference type="GO" id="GO:0009229">
    <property type="term" value="P:thiamine diphosphate biosynthetic process"/>
    <property type="evidence" value="ECO:0007669"/>
    <property type="project" value="UniProtKB-UniRule"/>
</dbReference>
<dbReference type="CDD" id="cd01170">
    <property type="entry name" value="THZ_kinase"/>
    <property type="match status" value="1"/>
</dbReference>
<dbReference type="Gene3D" id="3.40.1190.20">
    <property type="match status" value="1"/>
</dbReference>
<dbReference type="HAMAP" id="MF_00228">
    <property type="entry name" value="Thz_kinase"/>
    <property type="match status" value="1"/>
</dbReference>
<dbReference type="InterPro" id="IPR000417">
    <property type="entry name" value="Hyethyz_kinase"/>
</dbReference>
<dbReference type="InterPro" id="IPR029056">
    <property type="entry name" value="Ribokinase-like"/>
</dbReference>
<dbReference type="NCBIfam" id="NF006830">
    <property type="entry name" value="PRK09355.1"/>
    <property type="match status" value="1"/>
</dbReference>
<dbReference type="Pfam" id="PF02110">
    <property type="entry name" value="HK"/>
    <property type="match status" value="1"/>
</dbReference>
<dbReference type="PIRSF" id="PIRSF000513">
    <property type="entry name" value="Thz_kinase"/>
    <property type="match status" value="1"/>
</dbReference>
<dbReference type="PRINTS" id="PR01099">
    <property type="entry name" value="HYETHTZKNASE"/>
</dbReference>
<dbReference type="SUPFAM" id="SSF53613">
    <property type="entry name" value="Ribokinase-like"/>
    <property type="match status" value="1"/>
</dbReference>
<evidence type="ECO:0000255" key="1">
    <source>
        <dbReference type="HAMAP-Rule" id="MF_00228"/>
    </source>
</evidence>
<reference key="1">
    <citation type="book" date="2006" name="Gram positive pathogens, 2nd edition">
        <title>The Staphylococcus aureus NCTC 8325 genome.</title>
        <editorList>
            <person name="Fischetti V."/>
            <person name="Novick R."/>
            <person name="Ferretti J."/>
            <person name="Portnoy D."/>
            <person name="Rood J."/>
        </editorList>
        <authorList>
            <person name="Gillaspy A.F."/>
            <person name="Worrell V."/>
            <person name="Orvis J."/>
            <person name="Roe B.A."/>
            <person name="Dyer D.W."/>
            <person name="Iandolo J.J."/>
        </authorList>
    </citation>
    <scope>NUCLEOTIDE SEQUENCE [LARGE SCALE GENOMIC DNA]</scope>
    <source>
        <strain>NCTC 8325 / PS 47</strain>
    </source>
</reference>
<keyword id="KW-0067">ATP-binding</keyword>
<keyword id="KW-0418">Kinase</keyword>
<keyword id="KW-0460">Magnesium</keyword>
<keyword id="KW-0479">Metal-binding</keyword>
<keyword id="KW-0547">Nucleotide-binding</keyword>
<keyword id="KW-1185">Reference proteome</keyword>
<keyword id="KW-0784">Thiamine biosynthesis</keyword>
<keyword id="KW-0808">Transferase</keyword>
<name>THIM_STAA8</name>
<gene>
    <name evidence="1" type="primary">thiM</name>
    <name type="ordered locus">SAOUHSC_02329</name>
</gene>